<evidence type="ECO:0000255" key="1">
    <source>
        <dbReference type="HAMAP-Rule" id="MF_00210"/>
    </source>
</evidence>
<gene>
    <name evidence="1" type="primary">aroA</name>
    <name type="ordered locus">SSPA1692</name>
</gene>
<sequence>MESLTLQPIARVDGAINLPGSKSVSNRALLLAALACGKTVLTNLLDSDDVRHMLNALSALGINYTLSADRTRCDITGNGGPLRASGALELFLGNAGTAMRPLAAALCLGQNEIVLTGEPRMKERPIGHLVDSLRQGGANIDYLEQENYPPLRLRGGFIGGDIEVDGSVSSQFLTALLMTAPLAPEDTIIRVKGELVSKPYIDITLNLMKTFGVEIANHHYQQFVVKGGQQYHSPGRYLVEGDASSASYFLAAGAIKGGTVKVTGIGRKSMQGDIRFADVLEKMGATITWGDDFIACTRGELHAIDMDMNHIPDAAMTIATTALFAKGTTTLRNIYNWRVKETDRLFAMATELRKVGAEVEEGHDYIRITPPAKLHHADIGTYNDHRMAMCFSLVALSDTPVTILDPKCTAKTFPDYFEQLARMSTPA</sequence>
<accession>B5BBP9</accession>
<protein>
    <recommendedName>
        <fullName evidence="1">3-phosphoshikimate 1-carboxyvinyltransferase</fullName>
        <ecNumber evidence="1">2.5.1.19</ecNumber>
    </recommendedName>
    <alternativeName>
        <fullName evidence="1">5-enolpyruvylshikimate-3-phosphate synthase</fullName>
        <shortName evidence="1">EPSP synthase</shortName>
        <shortName evidence="1">EPSPS</shortName>
    </alternativeName>
</protein>
<feature type="chain" id="PRO_1000099750" description="3-phosphoshikimate 1-carboxyvinyltransferase">
    <location>
        <begin position="1"/>
        <end position="427"/>
    </location>
</feature>
<feature type="active site" description="Proton acceptor" evidence="1">
    <location>
        <position position="313"/>
    </location>
</feature>
<feature type="binding site" evidence="1">
    <location>
        <position position="22"/>
    </location>
    <ligand>
        <name>3-phosphoshikimate</name>
        <dbReference type="ChEBI" id="CHEBI:145989"/>
    </ligand>
</feature>
<feature type="binding site" evidence="1">
    <location>
        <position position="22"/>
    </location>
    <ligand>
        <name>phosphoenolpyruvate</name>
        <dbReference type="ChEBI" id="CHEBI:58702"/>
    </ligand>
</feature>
<feature type="binding site" evidence="1">
    <location>
        <position position="23"/>
    </location>
    <ligand>
        <name>3-phosphoshikimate</name>
        <dbReference type="ChEBI" id="CHEBI:145989"/>
    </ligand>
</feature>
<feature type="binding site" evidence="1">
    <location>
        <position position="27"/>
    </location>
    <ligand>
        <name>3-phosphoshikimate</name>
        <dbReference type="ChEBI" id="CHEBI:145989"/>
    </ligand>
</feature>
<feature type="binding site" evidence="1">
    <location>
        <position position="96"/>
    </location>
    <ligand>
        <name>phosphoenolpyruvate</name>
        <dbReference type="ChEBI" id="CHEBI:58702"/>
    </ligand>
</feature>
<feature type="binding site" evidence="1">
    <location>
        <position position="124"/>
    </location>
    <ligand>
        <name>phosphoenolpyruvate</name>
        <dbReference type="ChEBI" id="CHEBI:58702"/>
    </ligand>
</feature>
<feature type="binding site" evidence="1">
    <location>
        <position position="169"/>
    </location>
    <ligand>
        <name>3-phosphoshikimate</name>
        <dbReference type="ChEBI" id="CHEBI:145989"/>
    </ligand>
</feature>
<feature type="binding site" evidence="1">
    <location>
        <position position="170"/>
    </location>
    <ligand>
        <name>3-phosphoshikimate</name>
        <dbReference type="ChEBI" id="CHEBI:145989"/>
    </ligand>
</feature>
<feature type="binding site" evidence="1">
    <location>
        <position position="171"/>
    </location>
    <ligand>
        <name>3-phosphoshikimate</name>
        <dbReference type="ChEBI" id="CHEBI:145989"/>
    </ligand>
</feature>
<feature type="binding site" evidence="1">
    <location>
        <position position="171"/>
    </location>
    <ligand>
        <name>phosphoenolpyruvate</name>
        <dbReference type="ChEBI" id="CHEBI:58702"/>
    </ligand>
</feature>
<feature type="binding site" evidence="1">
    <location>
        <position position="197"/>
    </location>
    <ligand>
        <name>3-phosphoshikimate</name>
        <dbReference type="ChEBI" id="CHEBI:145989"/>
    </ligand>
</feature>
<feature type="binding site" evidence="1">
    <location>
        <position position="313"/>
    </location>
    <ligand>
        <name>3-phosphoshikimate</name>
        <dbReference type="ChEBI" id="CHEBI:145989"/>
    </ligand>
</feature>
<feature type="binding site" evidence="1">
    <location>
        <position position="336"/>
    </location>
    <ligand>
        <name>3-phosphoshikimate</name>
        <dbReference type="ChEBI" id="CHEBI:145989"/>
    </ligand>
</feature>
<feature type="binding site" evidence="1">
    <location>
        <position position="340"/>
    </location>
    <ligand>
        <name>3-phosphoshikimate</name>
        <dbReference type="ChEBI" id="CHEBI:145989"/>
    </ligand>
</feature>
<feature type="binding site" evidence="1">
    <location>
        <position position="344"/>
    </location>
    <ligand>
        <name>phosphoenolpyruvate</name>
        <dbReference type="ChEBI" id="CHEBI:58702"/>
    </ligand>
</feature>
<feature type="binding site" evidence="1">
    <location>
        <position position="386"/>
    </location>
    <ligand>
        <name>phosphoenolpyruvate</name>
        <dbReference type="ChEBI" id="CHEBI:58702"/>
    </ligand>
</feature>
<feature type="binding site" evidence="1">
    <location>
        <position position="411"/>
    </location>
    <ligand>
        <name>phosphoenolpyruvate</name>
        <dbReference type="ChEBI" id="CHEBI:58702"/>
    </ligand>
</feature>
<dbReference type="EC" id="2.5.1.19" evidence="1"/>
<dbReference type="EMBL" id="FM200053">
    <property type="protein sequence ID" value="CAR59885.1"/>
    <property type="molecule type" value="Genomic_DNA"/>
</dbReference>
<dbReference type="RefSeq" id="WP_000445201.1">
    <property type="nucleotide sequence ID" value="NC_011147.1"/>
</dbReference>
<dbReference type="SMR" id="B5BBP9"/>
<dbReference type="KEGG" id="sek:SSPA1692"/>
<dbReference type="HOGENOM" id="CLU_024321_0_0_6"/>
<dbReference type="UniPathway" id="UPA00053">
    <property type="reaction ID" value="UER00089"/>
</dbReference>
<dbReference type="Proteomes" id="UP000001869">
    <property type="component" value="Chromosome"/>
</dbReference>
<dbReference type="GO" id="GO:0005737">
    <property type="term" value="C:cytoplasm"/>
    <property type="evidence" value="ECO:0007669"/>
    <property type="project" value="UniProtKB-SubCell"/>
</dbReference>
<dbReference type="GO" id="GO:0003866">
    <property type="term" value="F:3-phosphoshikimate 1-carboxyvinyltransferase activity"/>
    <property type="evidence" value="ECO:0007669"/>
    <property type="project" value="UniProtKB-UniRule"/>
</dbReference>
<dbReference type="GO" id="GO:0008652">
    <property type="term" value="P:amino acid biosynthetic process"/>
    <property type="evidence" value="ECO:0007669"/>
    <property type="project" value="UniProtKB-KW"/>
</dbReference>
<dbReference type="GO" id="GO:0009073">
    <property type="term" value="P:aromatic amino acid family biosynthetic process"/>
    <property type="evidence" value="ECO:0007669"/>
    <property type="project" value="UniProtKB-KW"/>
</dbReference>
<dbReference type="GO" id="GO:0009423">
    <property type="term" value="P:chorismate biosynthetic process"/>
    <property type="evidence" value="ECO:0007669"/>
    <property type="project" value="UniProtKB-UniRule"/>
</dbReference>
<dbReference type="FunFam" id="3.65.10.10:FF:000003">
    <property type="entry name" value="3-phosphoshikimate 1-carboxyvinyltransferase"/>
    <property type="match status" value="1"/>
</dbReference>
<dbReference type="FunFam" id="3.65.10.10:FF:000004">
    <property type="entry name" value="3-phosphoshikimate 1-carboxyvinyltransferase"/>
    <property type="match status" value="1"/>
</dbReference>
<dbReference type="Gene3D" id="3.65.10.10">
    <property type="entry name" value="Enolpyruvate transferase domain"/>
    <property type="match status" value="2"/>
</dbReference>
<dbReference type="HAMAP" id="MF_00210">
    <property type="entry name" value="EPSP_synth"/>
    <property type="match status" value="1"/>
</dbReference>
<dbReference type="InterPro" id="IPR001986">
    <property type="entry name" value="Enolpyruvate_Tfrase_dom"/>
</dbReference>
<dbReference type="InterPro" id="IPR036968">
    <property type="entry name" value="Enolpyruvate_Tfrase_sf"/>
</dbReference>
<dbReference type="InterPro" id="IPR006264">
    <property type="entry name" value="EPSP_synthase"/>
</dbReference>
<dbReference type="InterPro" id="IPR023193">
    <property type="entry name" value="EPSP_synthase_CS"/>
</dbReference>
<dbReference type="InterPro" id="IPR013792">
    <property type="entry name" value="RNA3'P_cycl/enolpyr_Trfase_a/b"/>
</dbReference>
<dbReference type="NCBIfam" id="TIGR01356">
    <property type="entry name" value="aroA"/>
    <property type="match status" value="1"/>
</dbReference>
<dbReference type="PANTHER" id="PTHR21090">
    <property type="entry name" value="AROM/DEHYDROQUINATE SYNTHASE"/>
    <property type="match status" value="1"/>
</dbReference>
<dbReference type="PANTHER" id="PTHR21090:SF5">
    <property type="entry name" value="PENTAFUNCTIONAL AROM POLYPEPTIDE"/>
    <property type="match status" value="1"/>
</dbReference>
<dbReference type="Pfam" id="PF00275">
    <property type="entry name" value="EPSP_synthase"/>
    <property type="match status" value="1"/>
</dbReference>
<dbReference type="PIRSF" id="PIRSF000505">
    <property type="entry name" value="EPSPS"/>
    <property type="match status" value="1"/>
</dbReference>
<dbReference type="SUPFAM" id="SSF55205">
    <property type="entry name" value="EPT/RTPC-like"/>
    <property type="match status" value="1"/>
</dbReference>
<dbReference type="PROSITE" id="PS00104">
    <property type="entry name" value="EPSP_SYNTHASE_1"/>
    <property type="match status" value="1"/>
</dbReference>
<dbReference type="PROSITE" id="PS00885">
    <property type="entry name" value="EPSP_SYNTHASE_2"/>
    <property type="match status" value="1"/>
</dbReference>
<proteinExistence type="inferred from homology"/>
<name>AROA_SALPK</name>
<keyword id="KW-0028">Amino-acid biosynthesis</keyword>
<keyword id="KW-0057">Aromatic amino acid biosynthesis</keyword>
<keyword id="KW-0963">Cytoplasm</keyword>
<keyword id="KW-0808">Transferase</keyword>
<comment type="function">
    <text evidence="1">Catalyzes the transfer of the enolpyruvyl moiety of phosphoenolpyruvate (PEP) to the 5-hydroxyl of shikimate-3-phosphate (S3P) to produce enolpyruvyl shikimate-3-phosphate and inorganic phosphate.</text>
</comment>
<comment type="catalytic activity">
    <reaction evidence="1">
        <text>3-phosphoshikimate + phosphoenolpyruvate = 5-O-(1-carboxyvinyl)-3-phosphoshikimate + phosphate</text>
        <dbReference type="Rhea" id="RHEA:21256"/>
        <dbReference type="ChEBI" id="CHEBI:43474"/>
        <dbReference type="ChEBI" id="CHEBI:57701"/>
        <dbReference type="ChEBI" id="CHEBI:58702"/>
        <dbReference type="ChEBI" id="CHEBI:145989"/>
        <dbReference type="EC" id="2.5.1.19"/>
    </reaction>
    <physiologicalReaction direction="left-to-right" evidence="1">
        <dbReference type="Rhea" id="RHEA:21257"/>
    </physiologicalReaction>
</comment>
<comment type="pathway">
    <text evidence="1">Metabolic intermediate biosynthesis; chorismate biosynthesis; chorismate from D-erythrose 4-phosphate and phosphoenolpyruvate: step 6/7.</text>
</comment>
<comment type="subunit">
    <text evidence="1">Monomer.</text>
</comment>
<comment type="subcellular location">
    <subcellularLocation>
        <location evidence="1">Cytoplasm</location>
    </subcellularLocation>
</comment>
<comment type="similarity">
    <text evidence="1">Belongs to the EPSP synthase family.</text>
</comment>
<organism>
    <name type="scientific">Salmonella paratyphi A (strain AKU_12601)</name>
    <dbReference type="NCBI Taxonomy" id="554290"/>
    <lineage>
        <taxon>Bacteria</taxon>
        <taxon>Pseudomonadati</taxon>
        <taxon>Pseudomonadota</taxon>
        <taxon>Gammaproteobacteria</taxon>
        <taxon>Enterobacterales</taxon>
        <taxon>Enterobacteriaceae</taxon>
        <taxon>Salmonella</taxon>
    </lineage>
</organism>
<reference key="1">
    <citation type="journal article" date="2009" name="BMC Genomics">
        <title>Pseudogene accumulation in the evolutionary histories of Salmonella enterica serovars Paratyphi A and Typhi.</title>
        <authorList>
            <person name="Holt K.E."/>
            <person name="Thomson N.R."/>
            <person name="Wain J."/>
            <person name="Langridge G.C."/>
            <person name="Hasan R."/>
            <person name="Bhutta Z.A."/>
            <person name="Quail M.A."/>
            <person name="Norbertczak H."/>
            <person name="Walker D."/>
            <person name="Simmonds M."/>
            <person name="White B."/>
            <person name="Bason N."/>
            <person name="Mungall K."/>
            <person name="Dougan G."/>
            <person name="Parkhill J."/>
        </authorList>
    </citation>
    <scope>NUCLEOTIDE SEQUENCE [LARGE SCALE GENOMIC DNA]</scope>
    <source>
        <strain>AKU_12601</strain>
    </source>
</reference>